<protein>
    <recommendedName>
        <fullName evidence="1">Glutamate--tRNA ligase 1</fullName>
        <ecNumber evidence="1">6.1.1.17</ecNumber>
    </recommendedName>
    <alternativeName>
        <fullName evidence="1">Glutamyl-tRNA synthetase 1</fullName>
        <shortName evidence="1">GluRS 1</shortName>
    </alternativeName>
</protein>
<reference key="1">
    <citation type="journal article" date="2002" name="Proc. Natl. Acad. Sci. U.S.A.">
        <title>The genome sequence of the facultative intracellular pathogen Brucella melitensis.</title>
        <authorList>
            <person name="DelVecchio V.G."/>
            <person name="Kapatral V."/>
            <person name="Redkar R.J."/>
            <person name="Patra G."/>
            <person name="Mujer C."/>
            <person name="Los T."/>
            <person name="Ivanova N."/>
            <person name="Anderson I."/>
            <person name="Bhattacharyya A."/>
            <person name="Lykidis A."/>
            <person name="Reznik G."/>
            <person name="Jablonski L."/>
            <person name="Larsen N."/>
            <person name="D'Souza M."/>
            <person name="Bernal A."/>
            <person name="Mazur M."/>
            <person name="Goltsman E."/>
            <person name="Selkov E."/>
            <person name="Elzer P.H."/>
            <person name="Hagius S."/>
            <person name="O'Callaghan D."/>
            <person name="Letesson J.-J."/>
            <person name="Haselkorn R."/>
            <person name="Kyrpides N.C."/>
            <person name="Overbeek R."/>
        </authorList>
    </citation>
    <scope>NUCLEOTIDE SEQUENCE [LARGE SCALE GENOMIC DNA]</scope>
    <source>
        <strain>ATCC 23456 / CCUG 17765 / NCTC 10094 / 16M</strain>
    </source>
</reference>
<proteinExistence type="inferred from homology"/>
<gene>
    <name evidence="1" type="primary">gltX1</name>
    <name type="ordered locus">BMEI0837</name>
</gene>
<organism>
    <name type="scientific">Brucella melitensis biotype 1 (strain ATCC 23456 / CCUG 17765 / NCTC 10094 / 16M)</name>
    <dbReference type="NCBI Taxonomy" id="224914"/>
    <lineage>
        <taxon>Bacteria</taxon>
        <taxon>Pseudomonadati</taxon>
        <taxon>Pseudomonadota</taxon>
        <taxon>Alphaproteobacteria</taxon>
        <taxon>Hyphomicrobiales</taxon>
        <taxon>Brucellaceae</taxon>
        <taxon>Brucella/Ochrobactrum group</taxon>
        <taxon>Brucella</taxon>
    </lineage>
</organism>
<dbReference type="EC" id="6.1.1.17" evidence="1"/>
<dbReference type="EMBL" id="AE008917">
    <property type="protein sequence ID" value="AAL52018.1"/>
    <property type="status" value="ALT_INIT"/>
    <property type="molecule type" value="Genomic_DNA"/>
</dbReference>
<dbReference type="PIR" id="AG3356">
    <property type="entry name" value="AG3356"/>
</dbReference>
<dbReference type="SMR" id="Q8YHG4"/>
<dbReference type="GeneID" id="29593648"/>
<dbReference type="KEGG" id="bme:BMEI0837"/>
<dbReference type="KEGG" id="bmel:DK63_583"/>
<dbReference type="PATRIC" id="fig|224914.52.peg.608"/>
<dbReference type="eggNOG" id="COG0008">
    <property type="taxonomic scope" value="Bacteria"/>
</dbReference>
<dbReference type="PhylomeDB" id="Q8YHG4"/>
<dbReference type="Proteomes" id="UP000000419">
    <property type="component" value="Chromosome I"/>
</dbReference>
<dbReference type="GO" id="GO:0005829">
    <property type="term" value="C:cytosol"/>
    <property type="evidence" value="ECO:0007669"/>
    <property type="project" value="TreeGrafter"/>
</dbReference>
<dbReference type="GO" id="GO:0005524">
    <property type="term" value="F:ATP binding"/>
    <property type="evidence" value="ECO:0007669"/>
    <property type="project" value="UniProtKB-UniRule"/>
</dbReference>
<dbReference type="GO" id="GO:0004818">
    <property type="term" value="F:glutamate-tRNA ligase activity"/>
    <property type="evidence" value="ECO:0007669"/>
    <property type="project" value="UniProtKB-UniRule"/>
</dbReference>
<dbReference type="GO" id="GO:0000049">
    <property type="term" value="F:tRNA binding"/>
    <property type="evidence" value="ECO:0007669"/>
    <property type="project" value="InterPro"/>
</dbReference>
<dbReference type="GO" id="GO:0008270">
    <property type="term" value="F:zinc ion binding"/>
    <property type="evidence" value="ECO:0007669"/>
    <property type="project" value="InterPro"/>
</dbReference>
<dbReference type="GO" id="GO:0006424">
    <property type="term" value="P:glutamyl-tRNA aminoacylation"/>
    <property type="evidence" value="ECO:0007669"/>
    <property type="project" value="UniProtKB-UniRule"/>
</dbReference>
<dbReference type="CDD" id="cd00808">
    <property type="entry name" value="GluRS_core"/>
    <property type="match status" value="1"/>
</dbReference>
<dbReference type="FunFam" id="3.40.50.620:FF:000007">
    <property type="entry name" value="Glutamate--tRNA ligase"/>
    <property type="match status" value="1"/>
</dbReference>
<dbReference type="Gene3D" id="1.10.10.350">
    <property type="match status" value="1"/>
</dbReference>
<dbReference type="Gene3D" id="3.40.50.620">
    <property type="entry name" value="HUPs"/>
    <property type="match status" value="1"/>
</dbReference>
<dbReference type="HAMAP" id="MF_00022">
    <property type="entry name" value="Glu_tRNA_synth_type1"/>
    <property type="match status" value="1"/>
</dbReference>
<dbReference type="InterPro" id="IPR045462">
    <property type="entry name" value="aa-tRNA-synth_I_cd-bd"/>
</dbReference>
<dbReference type="InterPro" id="IPR020751">
    <property type="entry name" value="aa-tRNA-synth_I_codon-bd_sub2"/>
</dbReference>
<dbReference type="InterPro" id="IPR001412">
    <property type="entry name" value="aa-tRNA-synth_I_CS"/>
</dbReference>
<dbReference type="InterPro" id="IPR008925">
    <property type="entry name" value="aa_tRNA-synth_I_cd-bd_sf"/>
</dbReference>
<dbReference type="InterPro" id="IPR004527">
    <property type="entry name" value="Glu-tRNA-ligase_bac/mito"/>
</dbReference>
<dbReference type="InterPro" id="IPR000924">
    <property type="entry name" value="Glu/Gln-tRNA-synth"/>
</dbReference>
<dbReference type="InterPro" id="IPR020058">
    <property type="entry name" value="Glu/Gln-tRNA-synth_Ib_cat-dom"/>
</dbReference>
<dbReference type="InterPro" id="IPR049940">
    <property type="entry name" value="GluQ/Sye"/>
</dbReference>
<dbReference type="InterPro" id="IPR033910">
    <property type="entry name" value="GluRS_core"/>
</dbReference>
<dbReference type="InterPro" id="IPR014729">
    <property type="entry name" value="Rossmann-like_a/b/a_fold"/>
</dbReference>
<dbReference type="NCBIfam" id="TIGR00464">
    <property type="entry name" value="gltX_bact"/>
    <property type="match status" value="1"/>
</dbReference>
<dbReference type="PANTHER" id="PTHR43311">
    <property type="entry name" value="GLUTAMATE--TRNA LIGASE"/>
    <property type="match status" value="1"/>
</dbReference>
<dbReference type="PANTHER" id="PTHR43311:SF2">
    <property type="entry name" value="GLUTAMATE--TRNA LIGASE, MITOCHONDRIAL-RELATED"/>
    <property type="match status" value="1"/>
</dbReference>
<dbReference type="Pfam" id="PF19269">
    <property type="entry name" value="Anticodon_2"/>
    <property type="match status" value="1"/>
</dbReference>
<dbReference type="Pfam" id="PF00749">
    <property type="entry name" value="tRNA-synt_1c"/>
    <property type="match status" value="1"/>
</dbReference>
<dbReference type="PRINTS" id="PR00987">
    <property type="entry name" value="TRNASYNTHGLU"/>
</dbReference>
<dbReference type="SUPFAM" id="SSF48163">
    <property type="entry name" value="An anticodon-binding domain of class I aminoacyl-tRNA synthetases"/>
    <property type="match status" value="1"/>
</dbReference>
<dbReference type="SUPFAM" id="SSF52374">
    <property type="entry name" value="Nucleotidylyl transferase"/>
    <property type="match status" value="1"/>
</dbReference>
<dbReference type="PROSITE" id="PS00178">
    <property type="entry name" value="AA_TRNA_LIGASE_I"/>
    <property type="match status" value="1"/>
</dbReference>
<name>SYE1_BRUME</name>
<evidence type="ECO:0000255" key="1">
    <source>
        <dbReference type="HAMAP-Rule" id="MF_00022"/>
    </source>
</evidence>
<evidence type="ECO:0000256" key="2">
    <source>
        <dbReference type="SAM" id="MobiDB-lite"/>
    </source>
</evidence>
<evidence type="ECO:0000305" key="3"/>
<accession>Q8YHG4</accession>
<keyword id="KW-0030">Aminoacyl-tRNA synthetase</keyword>
<keyword id="KW-0067">ATP-binding</keyword>
<keyword id="KW-0963">Cytoplasm</keyword>
<keyword id="KW-0436">Ligase</keyword>
<keyword id="KW-0547">Nucleotide-binding</keyword>
<keyword id="KW-0648">Protein biosynthesis</keyword>
<comment type="function">
    <text evidence="1">Catalyzes the attachment of glutamate to tRNA(Glu) in a two-step reaction: glutamate is first activated by ATP to form Glu-AMP and then transferred to the acceptor end of tRNA(Glu).</text>
</comment>
<comment type="catalytic activity">
    <reaction evidence="1">
        <text>tRNA(Glu) + L-glutamate + ATP = L-glutamyl-tRNA(Glu) + AMP + diphosphate</text>
        <dbReference type="Rhea" id="RHEA:23540"/>
        <dbReference type="Rhea" id="RHEA-COMP:9663"/>
        <dbReference type="Rhea" id="RHEA-COMP:9680"/>
        <dbReference type="ChEBI" id="CHEBI:29985"/>
        <dbReference type="ChEBI" id="CHEBI:30616"/>
        <dbReference type="ChEBI" id="CHEBI:33019"/>
        <dbReference type="ChEBI" id="CHEBI:78442"/>
        <dbReference type="ChEBI" id="CHEBI:78520"/>
        <dbReference type="ChEBI" id="CHEBI:456215"/>
        <dbReference type="EC" id="6.1.1.17"/>
    </reaction>
</comment>
<comment type="subunit">
    <text evidence="1">Monomer.</text>
</comment>
<comment type="subcellular location">
    <subcellularLocation>
        <location evidence="1">Cytoplasm</location>
    </subcellularLocation>
</comment>
<comment type="similarity">
    <text evidence="1">Belongs to the class-I aminoacyl-tRNA synthetase family. Glutamate--tRNA ligase type 1 subfamily.</text>
</comment>
<comment type="sequence caution" evidence="3">
    <conflict type="erroneous initiation">
        <sequence resource="EMBL-CDS" id="AAL52018"/>
    </conflict>
</comment>
<feature type="chain" id="PRO_0000119522" description="Glutamate--tRNA ligase 1">
    <location>
        <begin position="1"/>
        <end position="473"/>
    </location>
</feature>
<feature type="region of interest" description="Disordered" evidence="2">
    <location>
        <begin position="113"/>
        <end position="136"/>
    </location>
</feature>
<feature type="short sequence motif" description="'HIGH' region" evidence="1">
    <location>
        <begin position="11"/>
        <end position="21"/>
    </location>
</feature>
<feature type="short sequence motif" description="'KMSKS' region" evidence="1">
    <location>
        <begin position="240"/>
        <end position="244"/>
    </location>
</feature>
<feature type="compositionally biased region" description="Basic and acidic residues" evidence="2">
    <location>
        <begin position="113"/>
        <end position="133"/>
    </location>
</feature>
<feature type="binding site" evidence="1">
    <location>
        <position position="243"/>
    </location>
    <ligand>
        <name>ATP</name>
        <dbReference type="ChEBI" id="CHEBI:30616"/>
    </ligand>
</feature>
<sequence length="473" mass="52063">MSKPVITRFAPSPTGYLHIGGARTALFNWLYAKHCGGKMLLRIEDTDRERSTEAATAAILDGLTWLGLDWDGEAISQFERAPRHREVAEELVANGKAYYCYASPEELEEMREKARAEGRPPRYDGRWRDRDPSEAPAGVKPVIRIKAPRDGETVVHDAVQGDVRFPNKDLDDFIILRSDGTPTYMHAVVVDDHDMGVTHIIRGDDHLTNAARQTIIYNAMGWDVPQMSHIPLIHGADGAKLSKRHGALGVDAYRAIGYLPAALRNYLVRLGWSHGDDEIMSTEQMIEWFDVKDINKGAARFDFQKLEAINGLYMRSSDDQALFDALVAVLPEIEGGKELAEALDDKGRAQLLLAMPGLKERAKTLVELADGAKFIFASRPLALDEKAASLLNDEGRAVLKPVYPVLEAMGEWTAESLDAAIRAHAEAEGLKLGKIAQPLRAALTGRATSPGVFDVLVVLGREESLARIGDQIG</sequence>